<dbReference type="EMBL" id="AM420293">
    <property type="protein sequence ID" value="CAM02981.1"/>
    <property type="molecule type" value="Genomic_DNA"/>
</dbReference>
<dbReference type="SMR" id="A4FG06"/>
<dbReference type="STRING" id="405948.SACE_3709"/>
<dbReference type="KEGG" id="sen:SACE_3709"/>
<dbReference type="eggNOG" id="COG1273">
    <property type="taxonomic scope" value="Bacteria"/>
</dbReference>
<dbReference type="HOGENOM" id="CLU_048975_1_1_11"/>
<dbReference type="OrthoDB" id="9795084at2"/>
<dbReference type="Proteomes" id="UP000006728">
    <property type="component" value="Chromosome"/>
</dbReference>
<dbReference type="GO" id="GO:0003690">
    <property type="term" value="F:double-stranded DNA binding"/>
    <property type="evidence" value="ECO:0007669"/>
    <property type="project" value="UniProtKB-UniRule"/>
</dbReference>
<dbReference type="GO" id="GO:0006310">
    <property type="term" value="P:DNA recombination"/>
    <property type="evidence" value="ECO:0007669"/>
    <property type="project" value="UniProtKB-KW"/>
</dbReference>
<dbReference type="GO" id="GO:0006303">
    <property type="term" value="P:double-strand break repair via nonhomologous end joining"/>
    <property type="evidence" value="ECO:0007669"/>
    <property type="project" value="UniProtKB-UniRule"/>
</dbReference>
<dbReference type="CDD" id="cd00789">
    <property type="entry name" value="KU_like"/>
    <property type="match status" value="1"/>
</dbReference>
<dbReference type="FunFam" id="2.40.290.10:FF:000004">
    <property type="entry name" value="Non-homologous end joining protein Ku"/>
    <property type="match status" value="1"/>
</dbReference>
<dbReference type="Gene3D" id="2.40.290.10">
    <property type="match status" value="1"/>
</dbReference>
<dbReference type="HAMAP" id="MF_01875">
    <property type="entry name" value="Prokaryotic_Ku"/>
    <property type="match status" value="1"/>
</dbReference>
<dbReference type="InterPro" id="IPR006164">
    <property type="entry name" value="Ku70/Ku80_beta-barrel_dom"/>
</dbReference>
<dbReference type="InterPro" id="IPR009187">
    <property type="entry name" value="Prok_Ku"/>
</dbReference>
<dbReference type="InterPro" id="IPR016194">
    <property type="entry name" value="SPOC-like_C_dom_sf"/>
</dbReference>
<dbReference type="NCBIfam" id="TIGR02772">
    <property type="entry name" value="Ku_bact"/>
    <property type="match status" value="1"/>
</dbReference>
<dbReference type="PANTHER" id="PTHR41251">
    <property type="entry name" value="NON-HOMOLOGOUS END JOINING PROTEIN KU"/>
    <property type="match status" value="1"/>
</dbReference>
<dbReference type="PANTHER" id="PTHR41251:SF1">
    <property type="entry name" value="NON-HOMOLOGOUS END JOINING PROTEIN KU"/>
    <property type="match status" value="1"/>
</dbReference>
<dbReference type="Pfam" id="PF02735">
    <property type="entry name" value="Ku"/>
    <property type="match status" value="1"/>
</dbReference>
<dbReference type="PIRSF" id="PIRSF006493">
    <property type="entry name" value="Prok_Ku"/>
    <property type="match status" value="1"/>
</dbReference>
<dbReference type="SMART" id="SM00559">
    <property type="entry name" value="Ku78"/>
    <property type="match status" value="1"/>
</dbReference>
<dbReference type="SUPFAM" id="SSF100939">
    <property type="entry name" value="SPOC domain-like"/>
    <property type="match status" value="1"/>
</dbReference>
<feature type="chain" id="PRO_0000389195" description="Non-homologous end joining protein Ku 2">
    <location>
        <begin position="1"/>
        <end position="306"/>
    </location>
</feature>
<feature type="domain" description="Ku" evidence="1">
    <location>
        <begin position="21"/>
        <end position="206"/>
    </location>
</feature>
<feature type="region of interest" description="Disordered" evidence="2">
    <location>
        <begin position="233"/>
        <end position="306"/>
    </location>
</feature>
<feature type="compositionally biased region" description="Basic residues" evidence="2">
    <location>
        <begin position="274"/>
        <end position="290"/>
    </location>
</feature>
<feature type="compositionally biased region" description="Basic and acidic residues" evidence="2">
    <location>
        <begin position="291"/>
        <end position="300"/>
    </location>
</feature>
<name>KU2_SACEN</name>
<accession>A4FG06</accession>
<sequence length="306" mass="35112">MINSPPIGYLPGMRTMWRGAISFGLVNIGVRLYAATADHDYQFHQVHRQDHGRIHHKRVCEECGREIDYDDIVKGYETSDGELVVLDSQDLRKLPIRTDRAIDLLECVPAEQVDPTYFQKTYYLEPEKSARRPYVLLREALRRTDLLAVVKITMRQRETLATIRPAGDVLVLHTMLWPDEIRRPDFDFLTDDAGDTEVSKQEIDMATSLVENMTEDFDPTEFTDDYQRALAELIDAKTKGTKPPRKRPEPADEGEVVDLMGALERSVDQARTSRTSRRKTTASASRRRSSSNREKTGSRDKTRKRA</sequence>
<comment type="function">
    <text evidence="1">With LigD forms a non-homologous end joining (NHEJ) DNA repair enzyme, which repairs dsDNA breaks with reduced fidelity. Binds linear dsDNA with 5'- and 3'- overhangs but not closed circular dsDNA nor ssDNA. Recruits and stimulates the ligase activity of LigD.</text>
</comment>
<comment type="subunit">
    <text evidence="1">Homodimer. Interacts with LigD.</text>
</comment>
<comment type="similarity">
    <text evidence="1">Belongs to the prokaryotic Ku family.</text>
</comment>
<reference key="1">
    <citation type="journal article" date="2007" name="Nat. Biotechnol.">
        <title>Complete genome sequence of the erythromycin-producing bacterium Saccharopolyspora erythraea NRRL23338.</title>
        <authorList>
            <person name="Oliynyk M."/>
            <person name="Samborskyy M."/>
            <person name="Lester J.B."/>
            <person name="Mironenko T."/>
            <person name="Scott N."/>
            <person name="Dickens S."/>
            <person name="Haydock S.F."/>
            <person name="Leadlay P.F."/>
        </authorList>
    </citation>
    <scope>NUCLEOTIDE SEQUENCE [LARGE SCALE GENOMIC DNA]</scope>
    <source>
        <strain>ATCC 11635 / DSM 40517 / JCM 4748 / NBRC 13426 / NCIMB 8594 / NRRL 2338</strain>
    </source>
</reference>
<protein>
    <recommendedName>
        <fullName evidence="1">Non-homologous end joining protein Ku 2</fullName>
    </recommendedName>
</protein>
<proteinExistence type="inferred from homology"/>
<keyword id="KW-0227">DNA damage</keyword>
<keyword id="KW-0233">DNA recombination</keyword>
<keyword id="KW-0234">DNA repair</keyword>
<keyword id="KW-0238">DNA-binding</keyword>
<keyword id="KW-1185">Reference proteome</keyword>
<gene>
    <name evidence="1" type="primary">ku2</name>
    <name type="ordered locus">SACE_3709</name>
</gene>
<organism>
    <name type="scientific">Saccharopolyspora erythraea (strain ATCC 11635 / DSM 40517 / JCM 4748 / NBRC 13426 / NCIMB 8594 / NRRL 2338)</name>
    <dbReference type="NCBI Taxonomy" id="405948"/>
    <lineage>
        <taxon>Bacteria</taxon>
        <taxon>Bacillati</taxon>
        <taxon>Actinomycetota</taxon>
        <taxon>Actinomycetes</taxon>
        <taxon>Pseudonocardiales</taxon>
        <taxon>Pseudonocardiaceae</taxon>
        <taxon>Saccharopolyspora</taxon>
    </lineage>
</organism>
<evidence type="ECO:0000255" key="1">
    <source>
        <dbReference type="HAMAP-Rule" id="MF_01875"/>
    </source>
</evidence>
<evidence type="ECO:0000256" key="2">
    <source>
        <dbReference type="SAM" id="MobiDB-lite"/>
    </source>
</evidence>